<accession>P23834</accession>
<proteinExistence type="evidence at protein level"/>
<sequence>TGAQSLSIVAPLDVLRQRLMNELNRRRMRELQGSRIQQNRQLLTSI</sequence>
<name>DIUH_ACHDO</name>
<evidence type="ECO:0000269" key="1">
    <source>
    </source>
</evidence>
<evidence type="ECO:0000305" key="2"/>
<protein>
    <recommendedName>
        <fullName>Diuretic hormone</fullName>
        <shortName>DH</shortName>
    </recommendedName>
    <alternativeName>
        <fullName>Diuretic peptide</fullName>
        <shortName>DP</shortName>
    </alternativeName>
</protein>
<organism>
    <name type="scientific">Acheta domesticus</name>
    <name type="common">House cricket</name>
    <dbReference type="NCBI Taxonomy" id="6997"/>
    <lineage>
        <taxon>Eukaryota</taxon>
        <taxon>Metazoa</taxon>
        <taxon>Ecdysozoa</taxon>
        <taxon>Arthropoda</taxon>
        <taxon>Hexapoda</taxon>
        <taxon>Insecta</taxon>
        <taxon>Pterygota</taxon>
        <taxon>Neoptera</taxon>
        <taxon>Polyneoptera</taxon>
        <taxon>Orthoptera</taxon>
        <taxon>Ensifera</taxon>
        <taxon>Gryllidea</taxon>
        <taxon>Grylloidea</taxon>
        <taxon>Gryllidae</taxon>
        <taxon>Gryllinae</taxon>
        <taxon>Acheta</taxon>
    </lineage>
</organism>
<feature type="chain" id="PRO_0000221016" description="Diuretic hormone">
    <location>
        <begin position="1"/>
        <end position="46"/>
    </location>
</feature>
<feature type="modified residue" description="Isoleucine amide" evidence="1">
    <location>
        <position position="46"/>
    </location>
</feature>
<keyword id="KW-0027">Amidation</keyword>
<keyword id="KW-0903">Direct protein sequencing</keyword>
<keyword id="KW-0372">Hormone</keyword>
<keyword id="KW-0964">Secreted</keyword>
<comment type="function">
    <text>Regulation of fluid secretion. Stimulates primary urine secretion by Malpighian tubules and causes a dose-dependent stimulation of cAMP levels in the tubules.</text>
</comment>
<comment type="subcellular location">
    <subcellularLocation>
        <location>Secreted</location>
    </subcellularLocation>
</comment>
<comment type="similarity">
    <text evidence="2">Belongs to the sauvagine/corticotropin-releasing factor/urotensin I family.</text>
</comment>
<dbReference type="PIR" id="S16198">
    <property type="entry name" value="S16198"/>
</dbReference>
<dbReference type="SMR" id="P23834"/>
<dbReference type="GO" id="GO:0005576">
    <property type="term" value="C:extracellular region"/>
    <property type="evidence" value="ECO:0007669"/>
    <property type="project" value="UniProtKB-SubCell"/>
</dbReference>
<dbReference type="GO" id="GO:0005179">
    <property type="term" value="F:hormone activity"/>
    <property type="evidence" value="ECO:0007669"/>
    <property type="project" value="UniProtKB-KW"/>
</dbReference>
<dbReference type="InterPro" id="IPR018446">
    <property type="entry name" value="Corticotropin-releasing_fac_CS"/>
</dbReference>
<dbReference type="InterPro" id="IPR000187">
    <property type="entry name" value="CRF"/>
</dbReference>
<dbReference type="Pfam" id="PF00473">
    <property type="entry name" value="CRF"/>
    <property type="match status" value="1"/>
</dbReference>
<dbReference type="SMART" id="SM00039">
    <property type="entry name" value="CRF"/>
    <property type="match status" value="1"/>
</dbReference>
<dbReference type="PROSITE" id="PS00511">
    <property type="entry name" value="CRF"/>
    <property type="match status" value="1"/>
</dbReference>
<reference key="1">
    <citation type="journal article" date="1991" name="Biol. Chem. Hoppe-Seyler">
        <title>Isolation and characterization of a diuretic peptide from Acheta domesticus. Evidence for a family of insect diuretic peptides.</title>
        <authorList>
            <person name="Kay I."/>
            <person name="Coast G.M."/>
            <person name="Cusinato O."/>
            <person name="Wheeler C.H."/>
            <person name="Totty N.F."/>
            <person name="Goldsworthy G.J."/>
        </authorList>
    </citation>
    <scope>PROTEIN SEQUENCE</scope>
    <scope>AMIDATION AT ILE-46</scope>
</reference>